<protein>
    <recommendedName>
        <fullName>COP9 signalosome complex subunit 5</fullName>
        <ecNumber>3.4.-.-</ecNumber>
    </recommendedName>
</protein>
<keyword id="KW-0963">Cytoplasm</keyword>
<keyword id="KW-0378">Hydrolase</keyword>
<keyword id="KW-0479">Metal-binding</keyword>
<keyword id="KW-0482">Metalloprotease</keyword>
<keyword id="KW-0539">Nucleus</keyword>
<keyword id="KW-0645">Protease</keyword>
<keyword id="KW-1185">Reference proteome</keyword>
<keyword id="KW-0736">Signalosome</keyword>
<keyword id="KW-0862">Zinc</keyword>
<gene>
    <name type="primary">RRI1</name>
    <name type="synonym">CSN5</name>
    <name type="ordered locus">YALI0E04829g</name>
</gene>
<organism>
    <name type="scientific">Yarrowia lipolytica (strain CLIB 122 / E 150)</name>
    <name type="common">Yeast</name>
    <name type="synonym">Candida lipolytica</name>
    <dbReference type="NCBI Taxonomy" id="284591"/>
    <lineage>
        <taxon>Eukaryota</taxon>
        <taxon>Fungi</taxon>
        <taxon>Dikarya</taxon>
        <taxon>Ascomycota</taxon>
        <taxon>Saccharomycotina</taxon>
        <taxon>Dipodascomycetes</taxon>
        <taxon>Dipodascales</taxon>
        <taxon>Dipodascales incertae sedis</taxon>
        <taxon>Yarrowia</taxon>
    </lineage>
</organism>
<name>CSN5_YARLI</name>
<proteinExistence type="inferred from homology"/>
<comment type="function">
    <text evidence="1">Catalytic Component of the COP9 signalosome (CSN) complex that acts as an regulator of the ubiquitin (Ubl) conjugation pathway by mediating the deneddylation of the cullin subunit of SCF-type E3 ubiquitin-protein ligase complexes.</text>
</comment>
<comment type="subunit">
    <text evidence="1">Component of the COP9 signalosome (CSN) complex.</text>
</comment>
<comment type="subcellular location">
    <subcellularLocation>
        <location evidence="1">Cytoplasm</location>
    </subcellularLocation>
    <subcellularLocation>
        <location evidence="1">Nucleus</location>
    </subcellularLocation>
</comment>
<comment type="domain">
    <text evidence="1">The JAMM motif is essential for the protease activity of the CSN complex resulting in deneddylation of cullins. It constitutes the catalytic center of the complex (By similarity).</text>
</comment>
<comment type="similarity">
    <text evidence="4">Belongs to the peptidase M67A family. CSN5 subfamily.</text>
</comment>
<dbReference type="EC" id="3.4.-.-"/>
<dbReference type="EMBL" id="CR382131">
    <property type="protein sequence ID" value="CAG79140.1"/>
    <property type="molecule type" value="Genomic_DNA"/>
</dbReference>
<dbReference type="RefSeq" id="XP_503559.1">
    <property type="nucleotide sequence ID" value="XM_503559.1"/>
</dbReference>
<dbReference type="SMR" id="Q6C703"/>
<dbReference type="FunCoup" id="Q6C703">
    <property type="interactions" value="46"/>
</dbReference>
<dbReference type="STRING" id="284591.Q6C703"/>
<dbReference type="MEROPS" id="M67.A13"/>
<dbReference type="EnsemblFungi" id="CAG79140">
    <property type="protein sequence ID" value="CAG79140"/>
    <property type="gene ID" value="YALI0_E04829g"/>
</dbReference>
<dbReference type="KEGG" id="yli:2912215"/>
<dbReference type="VEuPathDB" id="FungiDB:YALI0_E04829g"/>
<dbReference type="HOGENOM" id="CLU_053034_0_2_1"/>
<dbReference type="InParanoid" id="Q6C703"/>
<dbReference type="OMA" id="VKMKLFQ"/>
<dbReference type="OrthoDB" id="93489at4891"/>
<dbReference type="Proteomes" id="UP000001300">
    <property type="component" value="Chromosome E"/>
</dbReference>
<dbReference type="GO" id="GO:0008180">
    <property type="term" value="C:COP9 signalosome"/>
    <property type="evidence" value="ECO:0000318"/>
    <property type="project" value="GO_Central"/>
</dbReference>
<dbReference type="GO" id="GO:0005737">
    <property type="term" value="C:cytoplasm"/>
    <property type="evidence" value="ECO:0000318"/>
    <property type="project" value="GO_Central"/>
</dbReference>
<dbReference type="GO" id="GO:0019784">
    <property type="term" value="F:deNEDDylase activity"/>
    <property type="evidence" value="ECO:0000318"/>
    <property type="project" value="GO_Central"/>
</dbReference>
<dbReference type="GO" id="GO:0046872">
    <property type="term" value="F:metal ion binding"/>
    <property type="evidence" value="ECO:0007669"/>
    <property type="project" value="UniProtKB-KW"/>
</dbReference>
<dbReference type="GO" id="GO:0008237">
    <property type="term" value="F:metallopeptidase activity"/>
    <property type="evidence" value="ECO:0000318"/>
    <property type="project" value="GO_Central"/>
</dbReference>
<dbReference type="GO" id="GO:0000338">
    <property type="term" value="P:protein deneddylation"/>
    <property type="evidence" value="ECO:0007669"/>
    <property type="project" value="EnsemblFungi"/>
</dbReference>
<dbReference type="GO" id="GO:0006508">
    <property type="term" value="P:proteolysis"/>
    <property type="evidence" value="ECO:0007669"/>
    <property type="project" value="UniProtKB-KW"/>
</dbReference>
<dbReference type="GO" id="GO:0051726">
    <property type="term" value="P:regulation of cell cycle"/>
    <property type="evidence" value="ECO:0000318"/>
    <property type="project" value="GO_Central"/>
</dbReference>
<dbReference type="CDD" id="cd08069">
    <property type="entry name" value="MPN_RPN11_CSN5"/>
    <property type="match status" value="1"/>
</dbReference>
<dbReference type="FunFam" id="3.40.140.10:FF:000095">
    <property type="entry name" value="COP9 signalosome complex subunit 5"/>
    <property type="match status" value="1"/>
</dbReference>
<dbReference type="Gene3D" id="3.40.140.10">
    <property type="entry name" value="Cytidine Deaminase, domain 2"/>
    <property type="match status" value="1"/>
</dbReference>
<dbReference type="InterPro" id="IPR040961">
    <property type="entry name" value="CSN5_C"/>
</dbReference>
<dbReference type="InterPro" id="IPR000555">
    <property type="entry name" value="JAMM/MPN+_dom"/>
</dbReference>
<dbReference type="InterPro" id="IPR050242">
    <property type="entry name" value="JAMM_MPN+_peptidase_M67A"/>
</dbReference>
<dbReference type="InterPro" id="IPR037518">
    <property type="entry name" value="MPN"/>
</dbReference>
<dbReference type="PANTHER" id="PTHR10410">
    <property type="entry name" value="EUKARYOTIC TRANSLATION INITIATION FACTOR 3 -RELATED"/>
    <property type="match status" value="1"/>
</dbReference>
<dbReference type="Pfam" id="PF18323">
    <property type="entry name" value="CSN5_C"/>
    <property type="match status" value="1"/>
</dbReference>
<dbReference type="Pfam" id="PF01398">
    <property type="entry name" value="JAB"/>
    <property type="match status" value="1"/>
</dbReference>
<dbReference type="SMART" id="SM00232">
    <property type="entry name" value="JAB_MPN"/>
    <property type="match status" value="1"/>
</dbReference>
<dbReference type="SUPFAM" id="SSF102712">
    <property type="entry name" value="JAB1/MPN domain"/>
    <property type="match status" value="1"/>
</dbReference>
<dbReference type="PROSITE" id="PS50249">
    <property type="entry name" value="MPN"/>
    <property type="match status" value="1"/>
</dbReference>
<accession>Q6C703</accession>
<sequence>MASLATFQVENDIVDVDSTPQQGFDRDDLYKYDDVEQKAILAAHPWRTDPSYFRNVLVSSIALVKMAMHARSGGAIEVMGMMTGKILPNTFVVMDCYPLPVEGTETRVNAQQEGIEFMVEYLQGLKDVGRRENIVGWYHSHPGYGCWLSGIDVDTQFQNQQFQEPFLAVVVDPNRTISAGKVEIGAFRTYPKDYKPPKKATKQNQDQSVPLSKAKDYGAHSERYYELDVSFFKSSLDENLLQLLWNKNWAATLSQSTIQLNHDYTSKLMLDLSEKNAQLAIGLGEKTPQSQGRGFREAMSKADNEPHTNLLNYSTKGQWEAVNRSVKDGVQIGSDELQGLMSLEIQRRLFGRAK</sequence>
<evidence type="ECO:0000250" key="1"/>
<evidence type="ECO:0000255" key="2">
    <source>
        <dbReference type="PROSITE-ProRule" id="PRU01182"/>
    </source>
</evidence>
<evidence type="ECO:0000256" key="3">
    <source>
        <dbReference type="SAM" id="MobiDB-lite"/>
    </source>
</evidence>
<evidence type="ECO:0000305" key="4"/>
<reference key="1">
    <citation type="journal article" date="2004" name="Nature">
        <title>Genome evolution in yeasts.</title>
        <authorList>
            <person name="Dujon B."/>
            <person name="Sherman D."/>
            <person name="Fischer G."/>
            <person name="Durrens P."/>
            <person name="Casaregola S."/>
            <person name="Lafontaine I."/>
            <person name="de Montigny J."/>
            <person name="Marck C."/>
            <person name="Neuveglise C."/>
            <person name="Talla E."/>
            <person name="Goffard N."/>
            <person name="Frangeul L."/>
            <person name="Aigle M."/>
            <person name="Anthouard V."/>
            <person name="Babour A."/>
            <person name="Barbe V."/>
            <person name="Barnay S."/>
            <person name="Blanchin S."/>
            <person name="Beckerich J.-M."/>
            <person name="Beyne E."/>
            <person name="Bleykasten C."/>
            <person name="Boisrame A."/>
            <person name="Boyer J."/>
            <person name="Cattolico L."/>
            <person name="Confanioleri F."/>
            <person name="de Daruvar A."/>
            <person name="Despons L."/>
            <person name="Fabre E."/>
            <person name="Fairhead C."/>
            <person name="Ferry-Dumazet H."/>
            <person name="Groppi A."/>
            <person name="Hantraye F."/>
            <person name="Hennequin C."/>
            <person name="Jauniaux N."/>
            <person name="Joyet P."/>
            <person name="Kachouri R."/>
            <person name="Kerrest A."/>
            <person name="Koszul R."/>
            <person name="Lemaire M."/>
            <person name="Lesur I."/>
            <person name="Ma L."/>
            <person name="Muller H."/>
            <person name="Nicaud J.-M."/>
            <person name="Nikolski M."/>
            <person name="Oztas S."/>
            <person name="Ozier-Kalogeropoulos O."/>
            <person name="Pellenz S."/>
            <person name="Potier S."/>
            <person name="Richard G.-F."/>
            <person name="Straub M.-L."/>
            <person name="Suleau A."/>
            <person name="Swennen D."/>
            <person name="Tekaia F."/>
            <person name="Wesolowski-Louvel M."/>
            <person name="Westhof E."/>
            <person name="Wirth B."/>
            <person name="Zeniou-Meyer M."/>
            <person name="Zivanovic Y."/>
            <person name="Bolotin-Fukuhara M."/>
            <person name="Thierry A."/>
            <person name="Bouchier C."/>
            <person name="Caudron B."/>
            <person name="Scarpelli C."/>
            <person name="Gaillardin C."/>
            <person name="Weissenbach J."/>
            <person name="Wincker P."/>
            <person name="Souciet J.-L."/>
        </authorList>
    </citation>
    <scope>NUCLEOTIDE SEQUENCE [LARGE SCALE GENOMIC DNA]</scope>
    <source>
        <strain>CLIB 122 / E 150</strain>
    </source>
</reference>
<feature type="chain" id="PRO_0000194858" description="COP9 signalosome complex subunit 5">
    <location>
        <begin position="1"/>
        <end position="354"/>
    </location>
</feature>
<feature type="domain" description="MPN" evidence="2">
    <location>
        <begin position="56"/>
        <end position="193"/>
    </location>
</feature>
<feature type="region of interest" description="Disordered" evidence="3">
    <location>
        <begin position="193"/>
        <end position="212"/>
    </location>
</feature>
<feature type="short sequence motif" description="JAMM motif" evidence="2">
    <location>
        <begin position="139"/>
        <end position="152"/>
    </location>
</feature>
<feature type="binding site" evidence="2">
    <location>
        <position position="139"/>
    </location>
    <ligand>
        <name>Zn(2+)</name>
        <dbReference type="ChEBI" id="CHEBI:29105"/>
        <note>catalytic</note>
    </ligand>
</feature>
<feature type="binding site" evidence="2">
    <location>
        <position position="141"/>
    </location>
    <ligand>
        <name>Zn(2+)</name>
        <dbReference type="ChEBI" id="CHEBI:29105"/>
        <note>catalytic</note>
    </ligand>
</feature>
<feature type="binding site" evidence="2">
    <location>
        <position position="152"/>
    </location>
    <ligand>
        <name>Zn(2+)</name>
        <dbReference type="ChEBI" id="CHEBI:29105"/>
        <note>catalytic</note>
    </ligand>
</feature>